<organism>
    <name type="scientific">Laccaria bicolor (strain S238N-H82 / ATCC MYA-4686)</name>
    <name type="common">Bicoloured deceiver</name>
    <name type="synonym">Laccaria laccata var. bicolor</name>
    <dbReference type="NCBI Taxonomy" id="486041"/>
    <lineage>
        <taxon>Eukaryota</taxon>
        <taxon>Fungi</taxon>
        <taxon>Dikarya</taxon>
        <taxon>Basidiomycota</taxon>
        <taxon>Agaricomycotina</taxon>
        <taxon>Agaricomycetes</taxon>
        <taxon>Agaricomycetidae</taxon>
        <taxon>Agaricales</taxon>
        <taxon>Agaricineae</taxon>
        <taxon>Hydnangiaceae</taxon>
        <taxon>Laccaria</taxon>
    </lineage>
</organism>
<keyword id="KW-0067">ATP-binding</keyword>
<keyword id="KW-0963">Cytoplasm</keyword>
<keyword id="KW-0256">Endoplasmic reticulum</keyword>
<keyword id="KW-0378">Hydrolase</keyword>
<keyword id="KW-0479">Metal-binding</keyword>
<keyword id="KW-0547">Nucleotide-binding</keyword>
<keyword id="KW-1185">Reference proteome</keyword>
<keyword id="KW-0813">Transport</keyword>
<keyword id="KW-0862">Zinc</keyword>
<comment type="function">
    <text evidence="1">ATPase required for the post-translational delivery of tail-anchored (TA) proteins to the endoplasmic reticulum. Recognizes and selectively binds the transmembrane domain of TA proteins in the cytosol. This complex then targets to the endoplasmic reticulum by membrane-bound receptors, where the tail-anchored protein is released for insertion. This process is regulated by ATP binding and hydrolysis. ATP binding drives the homodimer towards the closed dimer state, facilitating recognition of newly synthesized TA membrane proteins. ATP hydrolysis is required for insertion. Subsequently, the homodimer reverts towards the open dimer state, lowering its affinity for the membrane-bound receptor, and returning it to the cytosol to initiate a new round of targeting.</text>
</comment>
<comment type="subunit">
    <text evidence="1">Homodimer.</text>
</comment>
<comment type="subcellular location">
    <subcellularLocation>
        <location evidence="1">Cytoplasm</location>
    </subcellularLocation>
    <subcellularLocation>
        <location evidence="1">Endoplasmic reticulum</location>
    </subcellularLocation>
</comment>
<comment type="similarity">
    <text evidence="1">Belongs to the arsA ATPase family.</text>
</comment>
<comment type="sequence caution" evidence="2">
    <conflict type="erroneous gene model prediction">
        <sequence resource="EMBL-CDS" id="EDR15466"/>
    </conflict>
</comment>
<evidence type="ECO:0000255" key="1">
    <source>
        <dbReference type="HAMAP-Rule" id="MF_03112"/>
    </source>
</evidence>
<evidence type="ECO:0000305" key="2"/>
<dbReference type="EC" id="3.6.-.-" evidence="1"/>
<dbReference type="EMBL" id="DS547091">
    <property type="protein sequence ID" value="EDR15466.1"/>
    <property type="status" value="ALT_SEQ"/>
    <property type="molecule type" value="Genomic_DNA"/>
</dbReference>
<dbReference type="RefSeq" id="XP_001873674.1">
    <property type="nucleotide sequence ID" value="XM_001873639.1"/>
</dbReference>
<dbReference type="SMR" id="B0CPJ0"/>
<dbReference type="FunCoup" id="B0CPJ0">
    <property type="interactions" value="549"/>
</dbReference>
<dbReference type="STRING" id="486041.B0CPJ0"/>
<dbReference type="GeneID" id="6069901"/>
<dbReference type="KEGG" id="lbc:LACBIDRAFT_227937"/>
<dbReference type="HOGENOM" id="CLU_040761_0_0_1"/>
<dbReference type="InParanoid" id="B0CPJ0"/>
<dbReference type="OrthoDB" id="1770at2759"/>
<dbReference type="Proteomes" id="UP000001194">
    <property type="component" value="Unassembled WGS sequence"/>
</dbReference>
<dbReference type="GO" id="GO:0043529">
    <property type="term" value="C:GET complex"/>
    <property type="evidence" value="ECO:0007669"/>
    <property type="project" value="TreeGrafter"/>
</dbReference>
<dbReference type="GO" id="GO:0005524">
    <property type="term" value="F:ATP binding"/>
    <property type="evidence" value="ECO:0007669"/>
    <property type="project" value="UniProtKB-UniRule"/>
</dbReference>
<dbReference type="GO" id="GO:0016887">
    <property type="term" value="F:ATP hydrolysis activity"/>
    <property type="evidence" value="ECO:0007669"/>
    <property type="project" value="InterPro"/>
</dbReference>
<dbReference type="GO" id="GO:0046872">
    <property type="term" value="F:metal ion binding"/>
    <property type="evidence" value="ECO:0007669"/>
    <property type="project" value="UniProtKB-KW"/>
</dbReference>
<dbReference type="GO" id="GO:0071816">
    <property type="term" value="P:tail-anchored membrane protein insertion into ER membrane"/>
    <property type="evidence" value="ECO:0007669"/>
    <property type="project" value="TreeGrafter"/>
</dbReference>
<dbReference type="CDD" id="cd02035">
    <property type="entry name" value="ArsA"/>
    <property type="match status" value="1"/>
</dbReference>
<dbReference type="FunFam" id="3.40.50.300:FF:000235">
    <property type="entry name" value="ATPase ASNA1"/>
    <property type="match status" value="1"/>
</dbReference>
<dbReference type="Gene3D" id="3.40.50.300">
    <property type="entry name" value="P-loop containing nucleotide triphosphate hydrolases"/>
    <property type="match status" value="1"/>
</dbReference>
<dbReference type="HAMAP" id="MF_03112">
    <property type="entry name" value="Asna1_Get3"/>
    <property type="match status" value="1"/>
</dbReference>
<dbReference type="InterPro" id="IPR025723">
    <property type="entry name" value="Anion-transp_ATPase-like_dom"/>
</dbReference>
<dbReference type="InterPro" id="IPR016300">
    <property type="entry name" value="ATPase_ArsA/GET3"/>
</dbReference>
<dbReference type="InterPro" id="IPR027542">
    <property type="entry name" value="ATPase_ArsA/GET3_euk"/>
</dbReference>
<dbReference type="InterPro" id="IPR027417">
    <property type="entry name" value="P-loop_NTPase"/>
</dbReference>
<dbReference type="NCBIfam" id="TIGR00345">
    <property type="entry name" value="GET3_arsA_TRC40"/>
    <property type="match status" value="1"/>
</dbReference>
<dbReference type="PANTHER" id="PTHR10803">
    <property type="entry name" value="ARSENICAL PUMP-DRIVING ATPASE ARSENITE-TRANSLOCATING ATPASE"/>
    <property type="match status" value="1"/>
</dbReference>
<dbReference type="PANTHER" id="PTHR10803:SF3">
    <property type="entry name" value="ATPASE GET3"/>
    <property type="match status" value="1"/>
</dbReference>
<dbReference type="Pfam" id="PF02374">
    <property type="entry name" value="ArsA_ATPase"/>
    <property type="match status" value="1"/>
</dbReference>
<dbReference type="SUPFAM" id="SSF52540">
    <property type="entry name" value="P-loop containing nucleoside triphosphate hydrolases"/>
    <property type="match status" value="1"/>
</dbReference>
<accession>B0CPJ0</accession>
<feature type="chain" id="PRO_0000388209" description="ATPase GET3">
    <location>
        <begin position="1"/>
        <end position="330"/>
    </location>
</feature>
<feature type="active site" evidence="1">
    <location>
        <position position="56"/>
    </location>
</feature>
<feature type="binding site" evidence="1">
    <location>
        <begin position="27"/>
        <end position="34"/>
    </location>
    <ligand>
        <name>ATP</name>
        <dbReference type="ChEBI" id="CHEBI:30616"/>
    </ligand>
</feature>
<feature type="binding site" evidence="1">
    <location>
        <position position="234"/>
    </location>
    <ligand>
        <name>ATP</name>
        <dbReference type="ChEBI" id="CHEBI:30616"/>
    </ligand>
</feature>
<feature type="binding site" evidence="1">
    <location>
        <position position="261"/>
    </location>
    <ligand>
        <name>ATP</name>
        <dbReference type="ChEBI" id="CHEBI:30616"/>
    </ligand>
</feature>
<feature type="binding site" evidence="1">
    <location>
        <position position="272"/>
    </location>
    <ligand>
        <name>Zn(2+)</name>
        <dbReference type="ChEBI" id="CHEBI:29105"/>
        <note>ligand shared between dimeric partners</note>
    </ligand>
</feature>
<feature type="binding site" evidence="1">
    <location>
        <position position="275"/>
    </location>
    <ligand>
        <name>Zn(2+)</name>
        <dbReference type="ChEBI" id="CHEBI:29105"/>
        <note>ligand shared between dimeric partners</note>
    </ligand>
</feature>
<gene>
    <name evidence="1" type="primary">GET3</name>
    <name type="ORF">LACBIDRAFT_227937</name>
</gene>
<sequence>MSTDLLPPTLQNILDQTSLKWIFCGGKGGVGKTTTSCSLAIQLAKCRKSVLLISTDPAHNLSDAFGQKFSKDATKVNGFDNLFAMEIDPTSAIQEMVEQCMLADSNGMMGSMMQDLAFAIPGVDEAMSFAEIMKHVHVKSMEYSVIVFDTAPTGHTLRFLSFPTVLEKALGKLSSLGSRFGPMISQMSSMMGGEAGSQEDMFAKLESMRGVITEVNTQFKDPEKTTFVCVCISEFLSLYETERLVQELTAYEIDTHNIVVNQLLFPKKSSNCEHCSVRQKMQQKYLAEAHELYDEFFHIIQLPLLTEEVRGPEKLNEFSKMLVEPYVTPE</sequence>
<name>GET3_LACBS</name>
<protein>
    <recommendedName>
        <fullName evidence="1">ATPase GET3</fullName>
        <ecNumber evidence="1">3.6.-.-</ecNumber>
    </recommendedName>
    <alternativeName>
        <fullName evidence="1">Arsenical pump-driving ATPase</fullName>
    </alternativeName>
    <alternativeName>
        <fullName evidence="1">Arsenite-stimulated ATPase</fullName>
    </alternativeName>
    <alternativeName>
        <fullName evidence="1">Golgi to ER traffic protein 3</fullName>
    </alternativeName>
    <alternativeName>
        <fullName evidence="1">Guided entry of tail-anchored proteins 3</fullName>
    </alternativeName>
</protein>
<proteinExistence type="inferred from homology"/>
<reference key="1">
    <citation type="journal article" date="2008" name="Nature">
        <title>The genome of Laccaria bicolor provides insights into mycorrhizal symbiosis.</title>
        <authorList>
            <person name="Martin F."/>
            <person name="Aerts A."/>
            <person name="Ahren D."/>
            <person name="Brun A."/>
            <person name="Danchin E.G.J."/>
            <person name="Duchaussoy F."/>
            <person name="Gibon J."/>
            <person name="Kohler A."/>
            <person name="Lindquist E."/>
            <person name="Pereda V."/>
            <person name="Salamov A."/>
            <person name="Shapiro H.J."/>
            <person name="Wuyts J."/>
            <person name="Blaudez D."/>
            <person name="Buee M."/>
            <person name="Brokstein P."/>
            <person name="Canbaeck B."/>
            <person name="Cohen D."/>
            <person name="Courty P.E."/>
            <person name="Coutinho P.M."/>
            <person name="Delaruelle C."/>
            <person name="Detter J.C."/>
            <person name="Deveau A."/>
            <person name="DiFazio S."/>
            <person name="Duplessis S."/>
            <person name="Fraissinet-Tachet L."/>
            <person name="Lucic E."/>
            <person name="Frey-Klett P."/>
            <person name="Fourrey C."/>
            <person name="Feussner I."/>
            <person name="Gay G."/>
            <person name="Grimwood J."/>
            <person name="Hoegger P.J."/>
            <person name="Jain P."/>
            <person name="Kilaru S."/>
            <person name="Labbe J."/>
            <person name="Lin Y.C."/>
            <person name="Legue V."/>
            <person name="Le Tacon F."/>
            <person name="Marmeisse R."/>
            <person name="Melayah D."/>
            <person name="Montanini B."/>
            <person name="Muratet M."/>
            <person name="Nehls U."/>
            <person name="Niculita-Hirzel H."/>
            <person name="Oudot-Le Secq M.P."/>
            <person name="Peter M."/>
            <person name="Quesneville H."/>
            <person name="Rajashekar B."/>
            <person name="Reich M."/>
            <person name="Rouhier N."/>
            <person name="Schmutz J."/>
            <person name="Yin T."/>
            <person name="Chalot M."/>
            <person name="Henrissat B."/>
            <person name="Kuees U."/>
            <person name="Lucas S."/>
            <person name="Van de Peer Y."/>
            <person name="Podila G.K."/>
            <person name="Polle A."/>
            <person name="Pukkila P.J."/>
            <person name="Richardson P.M."/>
            <person name="Rouze P."/>
            <person name="Sanders I.R."/>
            <person name="Stajich J.E."/>
            <person name="Tunlid A."/>
            <person name="Tuskan G."/>
            <person name="Grigoriev I.V."/>
        </authorList>
    </citation>
    <scope>NUCLEOTIDE SEQUENCE [LARGE SCALE GENOMIC DNA]</scope>
    <source>
        <strain>S238N-H82 / ATCC MYA-4686</strain>
    </source>
</reference>